<dbReference type="EMBL" id="AY653733">
    <property type="protein sequence ID" value="AAV50513.1"/>
    <property type="molecule type" value="Genomic_DNA"/>
</dbReference>
<dbReference type="KEGG" id="vg:9924847"/>
<dbReference type="Proteomes" id="UP000001134">
    <property type="component" value="Genome"/>
</dbReference>
<dbReference type="GO" id="GO:0044423">
    <property type="term" value="C:virion component"/>
    <property type="evidence" value="ECO:0007669"/>
    <property type="project" value="UniProtKB-KW"/>
</dbReference>
<dbReference type="InterPro" id="IPR008160">
    <property type="entry name" value="Collagen"/>
</dbReference>
<dbReference type="InterPro" id="IPR050938">
    <property type="entry name" value="Collagen_Structural_Proteins"/>
</dbReference>
<dbReference type="InterPro" id="IPR049304">
    <property type="entry name" value="Gly_rich_dom"/>
</dbReference>
<dbReference type="PANTHER" id="PTHR37456:SF3">
    <property type="entry name" value="COLLAGEN ALPHA-1(XXV) CHAIN"/>
    <property type="match status" value="1"/>
</dbReference>
<dbReference type="PANTHER" id="PTHR37456">
    <property type="entry name" value="SI:CH211-266K2.1"/>
    <property type="match status" value="1"/>
</dbReference>
<dbReference type="Pfam" id="PF01391">
    <property type="entry name" value="Collagen"/>
    <property type="match status" value="1"/>
</dbReference>
<dbReference type="Pfam" id="PF21722">
    <property type="entry name" value="Gly_rich_2"/>
    <property type="match status" value="1"/>
</dbReference>
<protein>
    <recommendedName>
        <fullName>Collagen-like protein 4</fullName>
    </recommendedName>
</protein>
<comment type="function">
    <text evidence="3">May participate in the formation of a layer of cross-linked glycosylated fibrils at the viral surface thus giving it a hairy-like appearance.</text>
</comment>
<comment type="subcellular location">
    <subcellularLocation>
        <location>Virion</location>
    </subcellularLocation>
</comment>
<comment type="PTM">
    <text evidence="3">May be hydroxylated on lysine by the viral-encoded procollagen-lysine,2-oxoglutarate 5-dioxygenase.</text>
</comment>
<reference key="1">
    <citation type="journal article" date="2004" name="Science">
        <title>The 1.2-megabase genome sequence of Mimivirus.</title>
        <authorList>
            <person name="Raoult D."/>
            <person name="Audic S."/>
            <person name="Robert C."/>
            <person name="Abergel C."/>
            <person name="Renesto P."/>
            <person name="Ogata H."/>
            <person name="La Scola B."/>
            <person name="Susan M."/>
            <person name="Claverie J.-M."/>
        </authorList>
    </citation>
    <scope>NUCLEOTIDE SEQUENCE [LARGE SCALE GENOMIC DNA]</scope>
    <source>
        <strain>Rowbotham-Bradford</strain>
    </source>
</reference>
<feature type="chain" id="PRO_0000059419" description="Collagen-like protein 4">
    <location>
        <begin position="1"/>
        <end position="817"/>
    </location>
</feature>
<feature type="domain" description="Collagen-like 1">
    <location>
        <begin position="83"/>
        <end position="142"/>
    </location>
</feature>
<feature type="domain" description="Collagen-like 2">
    <location>
        <begin position="145"/>
        <end position="264"/>
    </location>
</feature>
<feature type="domain" description="Collagen-like 3">
    <location>
        <begin position="268"/>
        <end position="327"/>
    </location>
</feature>
<feature type="domain" description="Collagen-like 4">
    <location>
        <begin position="352"/>
        <end position="411"/>
    </location>
</feature>
<feature type="domain" description="Collagen-like 5">
    <location>
        <begin position="430"/>
        <end position="489"/>
    </location>
</feature>
<feature type="domain" description="Collagen-like 6">
    <location>
        <begin position="512"/>
        <end position="570"/>
    </location>
</feature>
<feature type="region of interest" description="Disordered" evidence="2">
    <location>
        <begin position="87"/>
        <end position="107"/>
    </location>
</feature>
<feature type="region of interest" description="Disordered" evidence="2">
    <location>
        <begin position="120"/>
        <end position="458"/>
    </location>
</feature>
<feature type="region of interest" description="Disordered" evidence="2">
    <location>
        <begin position="479"/>
        <end position="543"/>
    </location>
</feature>
<feature type="region of interest" description="Disordered" evidence="2">
    <location>
        <begin position="757"/>
        <end position="804"/>
    </location>
</feature>
<feature type="compositionally biased region" description="Basic and acidic residues" evidence="2">
    <location>
        <begin position="126"/>
        <end position="141"/>
    </location>
</feature>
<feature type="compositionally biased region" description="Basic and acidic residues" evidence="2">
    <location>
        <begin position="149"/>
        <end position="161"/>
    </location>
</feature>
<feature type="compositionally biased region" description="Basic and acidic residues" evidence="2">
    <location>
        <begin position="212"/>
        <end position="224"/>
    </location>
</feature>
<feature type="compositionally biased region" description="Basic and acidic residues" evidence="2">
    <location>
        <begin position="233"/>
        <end position="245"/>
    </location>
</feature>
<feature type="compositionally biased region" description="Low complexity" evidence="2">
    <location>
        <begin position="246"/>
        <end position="260"/>
    </location>
</feature>
<feature type="compositionally biased region" description="Basic and acidic residues" evidence="2">
    <location>
        <begin position="294"/>
        <end position="341"/>
    </location>
</feature>
<feature type="compositionally biased region" description="Basic and acidic residues" evidence="2">
    <location>
        <begin position="354"/>
        <end position="368"/>
    </location>
</feature>
<feature type="compositionally biased region" description="Basic and acidic residues" evidence="2">
    <location>
        <begin position="377"/>
        <end position="390"/>
    </location>
</feature>
<feature type="compositionally biased region" description="Basic and acidic residues" evidence="2">
    <location>
        <begin position="428"/>
        <end position="458"/>
    </location>
</feature>
<feature type="compositionally biased region" description="Low complexity" evidence="2">
    <location>
        <begin position="480"/>
        <end position="494"/>
    </location>
</feature>
<feature type="compositionally biased region" description="Basic and acidic residues" evidence="2">
    <location>
        <begin position="495"/>
        <end position="504"/>
    </location>
</feature>
<feature type="compositionally biased region" description="Basic and acidic residues" evidence="2">
    <location>
        <begin position="515"/>
        <end position="525"/>
    </location>
</feature>
<feature type="compositionally biased region" description="Basic and acidic residues" evidence="2">
    <location>
        <begin position="533"/>
        <end position="543"/>
    </location>
</feature>
<feature type="compositionally biased region" description="Gly residues" evidence="2">
    <location>
        <begin position="757"/>
        <end position="771"/>
    </location>
</feature>
<feature type="glycosylation site" description="N-linked (GlcNAc...) asparagine; by host" evidence="1">
    <location>
        <position position="106"/>
    </location>
</feature>
<feature type="glycosylation site" description="N-linked (GlcNAc...) asparagine; by host" evidence="1">
    <location>
        <position position="121"/>
    </location>
</feature>
<feature type="glycosylation site" description="N-linked (GlcNAc...) asparagine; by host" evidence="1">
    <location>
        <position position="183"/>
    </location>
</feature>
<feature type="glycosylation site" description="N-linked (GlcNAc...) asparagine; by host" evidence="1">
    <location>
        <position position="345"/>
    </location>
</feature>
<feature type="glycosylation site" description="N-linked (GlcNAc...) asparagine; by host" evidence="1">
    <location>
        <position position="360"/>
    </location>
</feature>
<feature type="glycosylation site" description="N-linked (GlcNAc...) asparagine; by host" evidence="1">
    <location>
        <position position="483"/>
    </location>
</feature>
<feature type="glycosylation site" description="N-linked (GlcNAc...) asparagine; by host" evidence="1">
    <location>
        <position position="709"/>
    </location>
</feature>
<feature type="glycosylation site" description="N-linked (GlcNAc...) asparagine; by host" evidence="1">
    <location>
        <position position="712"/>
    </location>
</feature>
<feature type="glycosylation site" description="N-linked (GlcNAc...) asparagine; by host" evidence="1">
    <location>
        <position position="715"/>
    </location>
</feature>
<feature type="glycosylation site" description="N-linked (GlcNAc...) asparagine; by host" evidence="1">
    <location>
        <position position="772"/>
    </location>
</feature>
<sequence>MANNVNLLYGLPQRVITLPANLIQSKSKIFIGNGDPNCIIGNNCDMYIDKNSNRIFYKCGCNWLLTGTIMGDNGFIGLRGSKGDTGNKGEIGDNGENGDIGQIGDNGSIGSKGIKGMNGFNGSKGIKGDKGTDGIKGDKGQDNFGSKGQKGETGSKGDDGIKGITGSKGFKGDPGTKGENGINGTKGLKGSQGDLGTKGDDGIKGIIGSKGIKGDPGNKGEDGIKGTNGLKGSKGETGSKGDDGTKGITGLKGTKGNSGSKGDDGDKGIQGLKGEFGTKGNVGDKGDTGINGEKGSDGDKGNKGLDGIKGDLGDDGIKGDKGIKGLKGDTGNSDKGDKGSKGDSNFSKGGIGDKGSKGDNGSKGESGDKGIFGLKGSKGDIGDKGEKGDLGDTGLKGSKGLKGSKGDKGLVNVKGENGFVGDLGSKGSKGDKGESGDKGDIGIKGDKGAKGVTGDKGDKGTKGFIGNVGFKGDTGDKGIIGDNGSKGIKGSSNNKGDKGDKGNTGDKGITNTKGIKGDKGIKGSKGDLGSVGEKGEKGTKGDIGTKGETGLKGIIGDKGELGSKGIKGLSESFIESFYQEIPGTFVSTVPDGAVFGYLSAAGGGGGGGGIELSSLAGGGGGGSGCFYLLPLTVYPGSQFTGTIGQGGSGSTISAVLATKGSDTVINYGTLTFIAHGGFPGSSTLELGGNGDTVTYPLPVTPAPGGTGGNMTNGSNGSTSIFMFSGAGGGASGLNSGFNGGNVGPYVGGTSSPQIAGGGGGASAFGNGGRGGNTTQAATKGEYGSGGGGGSEFSPSGSTNGGDGGDGFVRIDYFMVPR</sequence>
<organismHost>
    <name type="scientific">Acanthamoeba polyphaga</name>
    <name type="common">Amoeba</name>
    <dbReference type="NCBI Taxonomy" id="5757"/>
</organismHost>
<name>COLL4_MIMIV</name>
<proteinExistence type="predicted"/>
<gene>
    <name type="ordered locus">MIMI_R240</name>
</gene>
<organism>
    <name type="scientific">Acanthamoeba polyphaga mimivirus</name>
    <name type="common">APMV</name>
    <dbReference type="NCBI Taxonomy" id="212035"/>
    <lineage>
        <taxon>Viruses</taxon>
        <taxon>Varidnaviria</taxon>
        <taxon>Bamfordvirae</taxon>
        <taxon>Nucleocytoviricota</taxon>
        <taxon>Megaviricetes</taxon>
        <taxon>Imitervirales</taxon>
        <taxon>Mimiviridae</taxon>
        <taxon>Megamimivirinae</taxon>
        <taxon>Mimivirus</taxon>
        <taxon>Mimivirus bradfordmassiliense</taxon>
    </lineage>
</organism>
<keyword id="KW-0176">Collagen</keyword>
<keyword id="KW-0325">Glycoprotein</keyword>
<keyword id="KW-0379">Hydroxylation</keyword>
<keyword id="KW-1185">Reference proteome</keyword>
<keyword id="KW-0677">Repeat</keyword>
<keyword id="KW-0946">Virion</keyword>
<accession>Q5UPS7</accession>
<evidence type="ECO:0000255" key="1"/>
<evidence type="ECO:0000256" key="2">
    <source>
        <dbReference type="SAM" id="MobiDB-lite"/>
    </source>
</evidence>
<evidence type="ECO:0000305" key="3"/>